<feature type="chain" id="PRO_0000294438" description="Tetratricopeptide repeat protein 29">
    <location>
        <begin position="1"/>
        <end position="471"/>
    </location>
</feature>
<feature type="repeat" description="TPR 1" evidence="3">
    <location>
        <begin position="92"/>
        <end position="131"/>
    </location>
</feature>
<feature type="repeat" description="TPR 2" evidence="3">
    <location>
        <begin position="136"/>
        <end position="173"/>
    </location>
</feature>
<feature type="repeat" description="TPR 3" evidence="4">
    <location>
        <begin position="182"/>
        <end position="215"/>
    </location>
</feature>
<feature type="repeat" description="TPR 4" evidence="4">
    <location>
        <begin position="234"/>
        <end position="267"/>
    </location>
</feature>
<feature type="repeat" description="TPR 5" evidence="4">
    <location>
        <begin position="274"/>
        <end position="307"/>
    </location>
</feature>
<feature type="repeat" description="TPR 6" evidence="4">
    <location>
        <begin position="314"/>
        <end position="347"/>
    </location>
</feature>
<feature type="repeat" description="TPR 7" evidence="4">
    <location>
        <begin position="354"/>
        <end position="387"/>
    </location>
</feature>
<organism>
    <name type="scientific">Rattus norvegicus</name>
    <name type="common">Rat</name>
    <dbReference type="NCBI Taxonomy" id="10116"/>
    <lineage>
        <taxon>Eukaryota</taxon>
        <taxon>Metazoa</taxon>
        <taxon>Chordata</taxon>
        <taxon>Craniata</taxon>
        <taxon>Vertebrata</taxon>
        <taxon>Euteleostomi</taxon>
        <taxon>Mammalia</taxon>
        <taxon>Eutheria</taxon>
        <taxon>Euarchontoglires</taxon>
        <taxon>Glires</taxon>
        <taxon>Rodentia</taxon>
        <taxon>Myomorpha</taxon>
        <taxon>Muroidea</taxon>
        <taxon>Muridae</taxon>
        <taxon>Murinae</taxon>
        <taxon>Rattus</taxon>
    </lineage>
</organism>
<sequence>MATFPPLSMTRTKLAVLARQKLPCSSKSIPRAQLIKEKDDIDYYLEQNIKGLSKEEVAAHRNSYKKSICVDMLRDGFHKSFTELFSLMEQWDKLREAAQARSLFWLQRPLEDQPDKLDNFYHYLTKAEAAERKGYYEEVYNNLYALACYFDNSEDKWVRNHFYERCFKIAQLIKVDGGKKEAEAEAHMGLLYEEEGELLKAAEHYEAFHELTQGRLWKDATGQFLNLIACESLVRTYRLLSDRMLQNRDYKQAIKILIKASEIAREGNDRSMEGEASYYLGLAHLASGEYETALSVLDRYSEISTSLDDELSLGRAYEAMAKVLQSQGEMTEAIKYLEKFVVIARNNFKSLDVIQACTMLGDIYNEKGQYNKASDYFQQAFSTAMEVTKTTLMDETKVHYGIARAHQMMLTMNGYIESADMNSLNCLLSWKETRTQVEYDPILGEARKATEDNIYQFPDAQEETRRSPENQ</sequence>
<gene>
    <name type="primary">Ttc29</name>
</gene>
<keyword id="KW-0966">Cell projection</keyword>
<keyword id="KW-0969">Cilium</keyword>
<keyword id="KW-0963">Cytoplasm</keyword>
<keyword id="KW-0206">Cytoskeleton</keyword>
<keyword id="KW-0282">Flagellum</keyword>
<keyword id="KW-1185">Reference proteome</keyword>
<keyword id="KW-0677">Repeat</keyword>
<keyword id="KW-0802">TPR repeat</keyword>
<name>TTC29_RAT</name>
<protein>
    <recommendedName>
        <fullName>Tetratricopeptide repeat protein 29</fullName>
        <shortName>TPR repeat protein 29</shortName>
    </recommendedName>
</protein>
<evidence type="ECO:0000250" key="1">
    <source>
        <dbReference type="UniProtKB" id="Q57ZB2"/>
    </source>
</evidence>
<evidence type="ECO:0000250" key="2">
    <source>
        <dbReference type="UniProtKB" id="Q80VM3"/>
    </source>
</evidence>
<evidence type="ECO:0000250" key="3">
    <source>
        <dbReference type="UniProtKB" id="Q8NA56"/>
    </source>
</evidence>
<evidence type="ECO:0000255" key="4"/>
<reference key="1">
    <citation type="journal article" date="2004" name="Genome Res.">
        <title>The status, quality, and expansion of the NIH full-length cDNA project: the Mammalian Gene Collection (MGC).</title>
        <authorList>
            <consortium name="The MGC Project Team"/>
        </authorList>
    </citation>
    <scope>NUCLEOTIDE SEQUENCE [LARGE SCALE MRNA]</scope>
    <source>
        <tissue>Testis</tissue>
    </source>
</reference>
<reference key="2">
    <citation type="journal article" date="2012" name="Nat. Commun.">
        <title>Quantitative maps of protein phosphorylation sites across 14 different rat organs and tissues.</title>
        <authorList>
            <person name="Lundby A."/>
            <person name="Secher A."/>
            <person name="Lage K."/>
            <person name="Nordsborg N.B."/>
            <person name="Dmytriyev A."/>
            <person name="Lundby C."/>
            <person name="Olsen J.V."/>
        </authorList>
    </citation>
    <scope>IDENTIFICATION BY MASS SPECTROMETRY [LARGE SCALE ANALYSIS]</scope>
</reference>
<accession>Q6AYP3</accession>
<dbReference type="EMBL" id="BC078968">
    <property type="protein sequence ID" value="AAH78968.1"/>
    <property type="molecule type" value="mRNA"/>
</dbReference>
<dbReference type="RefSeq" id="NP_001013912.1">
    <property type="nucleotide sequence ID" value="NM_001013890.1"/>
</dbReference>
<dbReference type="RefSeq" id="XP_017456705.1">
    <property type="nucleotide sequence ID" value="XM_017601216.3"/>
</dbReference>
<dbReference type="SMR" id="Q6AYP3"/>
<dbReference type="FunCoup" id="Q6AYP3">
    <property type="interactions" value="40"/>
</dbReference>
<dbReference type="STRING" id="10116.ENSRNOP00000071781"/>
<dbReference type="iPTMnet" id="Q6AYP3"/>
<dbReference type="PhosphoSitePlus" id="Q6AYP3"/>
<dbReference type="PaxDb" id="10116-ENSRNOP00000016558"/>
<dbReference type="Ensembl" id="ENSRNOT00000016558.5">
    <property type="protein sequence ID" value="ENSRNOP00000016558.4"/>
    <property type="gene ID" value="ENSRNOG00000012342.6"/>
</dbReference>
<dbReference type="GeneID" id="291944"/>
<dbReference type="KEGG" id="rno:291944"/>
<dbReference type="UCSC" id="RGD:1589777">
    <property type="organism name" value="rat"/>
</dbReference>
<dbReference type="AGR" id="RGD:1589777"/>
<dbReference type="CTD" id="83894"/>
<dbReference type="RGD" id="1589777">
    <property type="gene designation" value="Ttc29"/>
</dbReference>
<dbReference type="eggNOG" id="ENOG502QQ2U">
    <property type="taxonomic scope" value="Eukaryota"/>
</dbReference>
<dbReference type="GeneTree" id="ENSGT00390000008611"/>
<dbReference type="HOGENOM" id="CLU_041196_1_0_1"/>
<dbReference type="InParanoid" id="Q6AYP3"/>
<dbReference type="OrthoDB" id="34091at9989"/>
<dbReference type="PhylomeDB" id="Q6AYP3"/>
<dbReference type="TreeFam" id="TF328344"/>
<dbReference type="PRO" id="PR:Q6AYP3"/>
<dbReference type="Proteomes" id="UP000002494">
    <property type="component" value="Chromosome 19"/>
</dbReference>
<dbReference type="Bgee" id="ENSRNOG00000012342">
    <property type="expression patterns" value="Expressed in testis and 1 other cell type or tissue"/>
</dbReference>
<dbReference type="ExpressionAtlas" id="Q6AYP3">
    <property type="expression patterns" value="baseline and differential"/>
</dbReference>
<dbReference type="GO" id="GO:0005737">
    <property type="term" value="C:cytoplasm"/>
    <property type="evidence" value="ECO:0007669"/>
    <property type="project" value="UniProtKB-KW"/>
</dbReference>
<dbReference type="GO" id="GO:0005856">
    <property type="term" value="C:cytoskeleton"/>
    <property type="evidence" value="ECO:0007669"/>
    <property type="project" value="UniProtKB-KW"/>
</dbReference>
<dbReference type="GO" id="GO:0036126">
    <property type="term" value="C:sperm flagellum"/>
    <property type="evidence" value="ECO:0000250"/>
    <property type="project" value="UniProtKB"/>
</dbReference>
<dbReference type="GO" id="GO:0003341">
    <property type="term" value="P:cilium movement"/>
    <property type="evidence" value="ECO:0000250"/>
    <property type="project" value="UniProtKB"/>
</dbReference>
<dbReference type="GO" id="GO:0044782">
    <property type="term" value="P:cilium organization"/>
    <property type="evidence" value="ECO:0000266"/>
    <property type="project" value="RGD"/>
</dbReference>
<dbReference type="Gene3D" id="1.25.40.10">
    <property type="entry name" value="Tetratricopeptide repeat domain"/>
    <property type="match status" value="2"/>
</dbReference>
<dbReference type="InterPro" id="IPR051476">
    <property type="entry name" value="Bac_ResReg_Asp_Phosphatase"/>
</dbReference>
<dbReference type="InterPro" id="IPR011990">
    <property type="entry name" value="TPR-like_helical_dom_sf"/>
</dbReference>
<dbReference type="InterPro" id="IPR019734">
    <property type="entry name" value="TPR_rpt"/>
</dbReference>
<dbReference type="PANTHER" id="PTHR46630">
    <property type="entry name" value="TETRATRICOPEPTIDE REPEAT PROTEIN 29"/>
    <property type="match status" value="1"/>
</dbReference>
<dbReference type="PANTHER" id="PTHR46630:SF1">
    <property type="entry name" value="TETRATRICOPEPTIDE REPEAT PROTEIN 29"/>
    <property type="match status" value="1"/>
</dbReference>
<dbReference type="Pfam" id="PF13424">
    <property type="entry name" value="TPR_12"/>
    <property type="match status" value="1"/>
</dbReference>
<dbReference type="SMART" id="SM00028">
    <property type="entry name" value="TPR"/>
    <property type="match status" value="4"/>
</dbReference>
<dbReference type="SUPFAM" id="SSF48452">
    <property type="entry name" value="TPR-like"/>
    <property type="match status" value="1"/>
</dbReference>
<dbReference type="PROSITE" id="PS50005">
    <property type="entry name" value="TPR"/>
    <property type="match status" value="5"/>
</dbReference>
<dbReference type="PROSITE" id="PS50293">
    <property type="entry name" value="TPR_REGION"/>
    <property type="match status" value="2"/>
</dbReference>
<comment type="function">
    <text evidence="3">Axonemal protein which is implicated in axonemal and/or peri-axonemal structure assembly and regulates flagellum assembly and beating and therefore sperm motility.</text>
</comment>
<comment type="subcellular location">
    <subcellularLocation>
        <location evidence="2">Cytoplasm</location>
        <location evidence="2">Cytoskeleton</location>
        <location evidence="2">Flagellum axoneme</location>
    </subcellularLocation>
</comment>
<comment type="domain">
    <text evidence="1">The TPR repeats are required for axonemal localization and flagellar beating.</text>
</comment>
<proteinExistence type="evidence at protein level"/>